<proteinExistence type="evidence at protein level"/>
<evidence type="ECO:0000250" key="1">
    <source>
        <dbReference type="UniProtKB" id="P61076"/>
    </source>
</evidence>
<evidence type="ECO:0000269" key="2">
    <source>
    </source>
</evidence>
<evidence type="ECO:0000303" key="3">
    <source>
    </source>
</evidence>
<evidence type="ECO:0000303" key="4">
    <source>
    </source>
</evidence>
<evidence type="ECO:0000305" key="5"/>
<evidence type="ECO:0000305" key="6">
    <source>
    </source>
</evidence>
<keyword id="KW-0963">Cytoplasm</keyword>
<keyword id="KW-1015">Disulfide bond</keyword>
<keyword id="KW-0274">FAD</keyword>
<keyword id="KW-0285">Flavoprotein</keyword>
<keyword id="KW-0521">NADP</keyword>
<keyword id="KW-0560">Oxidoreductase</keyword>
<keyword id="KW-0676">Redox-active center</keyword>
<accession>Q25861</accession>
<accession>Q25864</accession>
<gene>
    <name evidence="4" type="primary">TRXR</name>
    <name evidence="3" type="synonym">GR</name>
</gene>
<sequence>MCKDKNEKKNYEHVNANEKNGYLASEKNELTKNKVEEHTYDYDYVVIGGGPGGMASAKEAAAHGARVLLFDYVKPSSQGTKWGIGGTCVNVGCVPKKLMHYAGHMGSIFKLDSKAYGWKFDNLKHDWKKLVTTVQSHIRSLNFSYMTGLRSSKVKYINGLAKLKDKNTVSYYLKGDLSKEETVTGKYILIATGCRPHIPDDVEGAKELSITSDDIFSLKKDPGKTLVVGASYVALECSGFLNSLGYDVTVAVRSIVLRGFDQQCAVKVKLYMEEQGVMFKNGILPKKLTKMDDKILVEFSDKTSELYDTVLYAIGRKGDIDGLNLESLNMNVNKSNNKIIADHLSCTNIPSIFAVGDVAENVPELAPVAIKAGEILARRLFKDSDEIMDYSYIPTSIYTPIEYGACGYSEEKAYELYGKSNVEVFLQEFNNLEISAVHRQKHIRAQKDEYDLDVSSTCLAKLVCLKNEDNRVIGFHYVGPNAGEVTQGMALALRLKVKKKDFDNCIGIHPTDAESFMNLFVTISSGLSYAAKGGCGGGKCG</sequence>
<name>TRXR_PLAF5</name>
<protein>
    <recommendedName>
        <fullName evidence="4">Thioredoxin reductase</fullName>
        <shortName evidence="4">PfTrxR</shortName>
        <ecNumber evidence="2">1.8.1.9</ecNumber>
    </recommendedName>
</protein>
<feature type="chain" id="PRO_0000067986" description="Thioredoxin reductase">
    <location>
        <begin position="1"/>
        <end position="541"/>
    </location>
</feature>
<feature type="region of interest" description="Loop important for the interaction with TRX1" evidence="1">
    <location>
        <begin position="438"/>
        <end position="452"/>
    </location>
</feature>
<feature type="active site" description="Proton acceptor" evidence="1">
    <location>
        <position position="509"/>
    </location>
</feature>
<feature type="binding site" description="in other chain" evidence="1">
    <location>
        <begin position="51"/>
        <end position="52"/>
    </location>
    <ligand>
        <name>FAD</name>
        <dbReference type="ChEBI" id="CHEBI:57692"/>
        <note>ligand shared between dimeric partners</note>
    </ligand>
</feature>
<feature type="binding site" description="in other chain" evidence="1">
    <location>
        <begin position="71"/>
        <end position="74"/>
    </location>
    <ligand>
        <name>FAD</name>
        <dbReference type="ChEBI" id="CHEBI:57692"/>
        <note>ligand shared between dimeric partners</note>
    </ligand>
</feature>
<feature type="binding site" description="in other chain" evidence="1">
    <location>
        <begin position="87"/>
        <end position="88"/>
    </location>
    <ligand>
        <name>FAD</name>
        <dbReference type="ChEBI" id="CHEBI:57692"/>
        <note>ligand shared between dimeric partners</note>
    </ligand>
</feature>
<feature type="binding site" description="in other chain" evidence="1">
    <location>
        <begin position="92"/>
        <end position="96"/>
    </location>
    <ligand>
        <name>FAD</name>
        <dbReference type="ChEBI" id="CHEBI:57692"/>
        <note>ligand shared between dimeric partners</note>
    </ligand>
</feature>
<feature type="binding site" description="in other chain" evidence="1">
    <location>
        <position position="161"/>
    </location>
    <ligand>
        <name>FAD</name>
        <dbReference type="ChEBI" id="CHEBI:57692"/>
        <note>ligand shared between dimeric partners</note>
    </ligand>
</feature>
<feature type="binding site" description="in other chain" evidence="1">
    <location>
        <position position="357"/>
    </location>
    <ligand>
        <name>FAD</name>
        <dbReference type="ChEBI" id="CHEBI:57692"/>
        <note>ligand shared between dimeric partners</note>
    </ligand>
</feature>
<feature type="binding site" description="in other chain" evidence="1">
    <location>
        <begin position="364"/>
        <end position="366"/>
    </location>
    <ligand>
        <name>FAD</name>
        <dbReference type="ChEBI" id="CHEBI:57692"/>
        <note>ligand shared between dimeric partners</note>
    </ligand>
</feature>
<feature type="binding site" evidence="1">
    <location>
        <position position="509"/>
    </location>
    <ligand>
        <name>FAD</name>
        <dbReference type="ChEBI" id="CHEBI:57692"/>
        <note>ligand shared between dimeric partners</note>
    </ligand>
</feature>
<feature type="disulfide bond" description="Redox-active" evidence="1">
    <location>
        <begin position="88"/>
        <end position="93"/>
    </location>
</feature>
<feature type="disulfide bond" description="Redox-active" evidence="1">
    <location>
        <begin position="535"/>
        <end position="540"/>
    </location>
</feature>
<feature type="sequence conflict" description="In Ref. 2; CAA58583." evidence="5" ref="2">
    <original>GGP</original>
    <variation>AGS</variation>
    <location>
        <begin position="49"/>
        <end position="51"/>
    </location>
</feature>
<feature type="sequence conflict" description="In Ref. 2; CAA58583." evidence="5" ref="2">
    <original>DAESFM</original>
    <variation>AAEELS</variation>
    <location>
        <begin position="512"/>
        <end position="517"/>
    </location>
</feature>
<organism>
    <name type="scientific">Plasmodium falciparum (isolate FCH-5)</name>
    <dbReference type="NCBI Taxonomy" id="132416"/>
    <lineage>
        <taxon>Eukaryota</taxon>
        <taxon>Sar</taxon>
        <taxon>Alveolata</taxon>
        <taxon>Apicomplexa</taxon>
        <taxon>Aconoidasida</taxon>
        <taxon>Haemosporida</taxon>
        <taxon>Plasmodiidae</taxon>
        <taxon>Plasmodium</taxon>
        <taxon>Plasmodium (Laverania)</taxon>
    </lineage>
</organism>
<comment type="function">
    <text evidence="1 2">Catalyzes the transfer of electrons from NADPH to thioredoxins TRX1, TRX2 and TRX3, which in turn act as reductants of disulfide containing proteins (PubMed:8892299). Able to reduce nitroglutathione (GSNO), a compound involved in the transport of nitric oxide (NO); however, TRX1 is more efficient in reducing GSNO. Has no catalytic activity towards oxidized glutathione (GSSG) (By similarity).</text>
</comment>
<comment type="catalytic activity">
    <reaction evidence="2">
        <text>[thioredoxin]-dithiol + NADP(+) = [thioredoxin]-disulfide + NADPH + H(+)</text>
        <dbReference type="Rhea" id="RHEA:20345"/>
        <dbReference type="Rhea" id="RHEA-COMP:10698"/>
        <dbReference type="Rhea" id="RHEA-COMP:10700"/>
        <dbReference type="ChEBI" id="CHEBI:15378"/>
        <dbReference type="ChEBI" id="CHEBI:29950"/>
        <dbReference type="ChEBI" id="CHEBI:50058"/>
        <dbReference type="ChEBI" id="CHEBI:57783"/>
        <dbReference type="ChEBI" id="CHEBI:58349"/>
        <dbReference type="EC" id="1.8.1.9"/>
    </reaction>
    <physiologicalReaction direction="right-to-left" evidence="2">
        <dbReference type="Rhea" id="RHEA:20347"/>
    </physiologicalReaction>
</comment>
<comment type="cofactor">
    <cofactor evidence="1">
        <name>FAD</name>
        <dbReference type="ChEBI" id="CHEBI:57692"/>
    </cofactor>
    <text evidence="1">Binds 1 FAD per subunit.</text>
</comment>
<comment type="biophysicochemical properties">
    <kinetics>
        <KM evidence="2">4.1 uM for NADPH (at 20 degrees Celsius and pH 7.4)</KM>
        <KM evidence="2">66 uM for E.coli thioredoxin (at 37 degrees Celsius and pH 7.6)</KM>
    </kinetics>
</comment>
<comment type="subunit">
    <text evidence="2">Homodimer.</text>
</comment>
<comment type="subcellular location">
    <subcellularLocation>
        <location evidence="1">Cytoplasm</location>
    </subcellularLocation>
</comment>
<comment type="miscellaneous">
    <text evidence="5">There are 2 isoforms resulting from alternative translation initiation. The displayed sequence is likely to represent the shorter isoform.</text>
</comment>
<comment type="miscellaneous">
    <text evidence="1">In Plasmodium, the C-terminal redox center, which acts as the active site, is formed by two cysteines while in mammalian TRXR this redox center is composed of a cysteine-selenocysteine active site.</text>
</comment>
<comment type="similarity">
    <text evidence="5">Belongs to the class-I pyridine nucleotide-disulfide oxidoreductase family.</text>
</comment>
<comment type="caution">
    <text evidence="6">Was originally thought to be a glutathione reductase.</text>
</comment>
<reference key="1">
    <citation type="journal article" date="1995" name="Mol. Biochem. Parasitol.">
        <title>Plasmodium falciparum glutathione reductase exhibits sequence similarities with the human host enzyme in the core structure but differs at the ligand-binding sites.</title>
        <authorList>
            <person name="Mueller S."/>
            <person name="Becker K."/>
            <person name="Bergmann B."/>
            <person name="Schirmer R.H."/>
            <person name="Walter R.D."/>
        </authorList>
    </citation>
    <scope>NUCLEOTIDE SEQUENCE [GENOMIC DNA / MRNA]</scope>
</reference>
<reference key="2">
    <citation type="journal article" date="1996" name="Mol. Biochem. Parasitol.">
        <title>Recombinant putative glutathione reductase of Plasmodium falciparum exhibits thioredoxin reductase activity.</title>
        <authorList>
            <person name="Mueller S."/>
            <person name="Gilberger T.-W."/>
            <person name="Faerber P.M."/>
            <person name="Becker K."/>
            <person name="Schirmer R.H."/>
            <person name="Walter R.D."/>
        </authorList>
    </citation>
    <scope>NUCLEOTIDE SEQUENCE [GENOMIC DNA / MRNA] OF 47-517</scope>
    <scope>FUNCTION</scope>
    <scope>CATALYTIC ACTIVITY</scope>
    <scope>BIOPHYSICOCHEMICAL PROPERTIES</scope>
    <scope>SUBUNIT</scope>
</reference>
<dbReference type="EC" id="1.8.1.9" evidence="2"/>
<dbReference type="EMBL" id="X87095">
    <property type="protein sequence ID" value="CAA60574.1"/>
    <property type="molecule type" value="mRNA"/>
</dbReference>
<dbReference type="EMBL" id="X83603">
    <property type="protein sequence ID" value="CAA58583.1"/>
    <property type="molecule type" value="Genomic_DNA"/>
</dbReference>
<dbReference type="PIR" id="S57658">
    <property type="entry name" value="S57658"/>
</dbReference>
<dbReference type="SMR" id="Q25861"/>
<dbReference type="SABIO-RK" id="Q25861"/>
<dbReference type="GO" id="GO:0005829">
    <property type="term" value="C:cytosol"/>
    <property type="evidence" value="ECO:0007669"/>
    <property type="project" value="TreeGrafter"/>
</dbReference>
<dbReference type="GO" id="GO:0005739">
    <property type="term" value="C:mitochondrion"/>
    <property type="evidence" value="ECO:0007669"/>
    <property type="project" value="TreeGrafter"/>
</dbReference>
<dbReference type="GO" id="GO:0050660">
    <property type="term" value="F:flavin adenine dinucleotide binding"/>
    <property type="evidence" value="ECO:0007669"/>
    <property type="project" value="InterPro"/>
</dbReference>
<dbReference type="GO" id="GO:0004362">
    <property type="term" value="F:glutathione-disulfide reductase (NADPH) activity"/>
    <property type="evidence" value="ECO:0007669"/>
    <property type="project" value="TreeGrafter"/>
</dbReference>
<dbReference type="GO" id="GO:0004791">
    <property type="term" value="F:thioredoxin-disulfide reductase (NADPH) activity"/>
    <property type="evidence" value="ECO:0007669"/>
    <property type="project" value="UniProtKB-EC"/>
</dbReference>
<dbReference type="GO" id="GO:0045454">
    <property type="term" value="P:cell redox homeostasis"/>
    <property type="evidence" value="ECO:0007669"/>
    <property type="project" value="InterPro"/>
</dbReference>
<dbReference type="GO" id="GO:0034599">
    <property type="term" value="P:cellular response to oxidative stress"/>
    <property type="evidence" value="ECO:0007669"/>
    <property type="project" value="TreeGrafter"/>
</dbReference>
<dbReference type="GO" id="GO:0006749">
    <property type="term" value="P:glutathione metabolic process"/>
    <property type="evidence" value="ECO:0007669"/>
    <property type="project" value="TreeGrafter"/>
</dbReference>
<dbReference type="FunFam" id="3.50.50.60:FF:000190">
    <property type="entry name" value="Thioredoxin reductase"/>
    <property type="match status" value="1"/>
</dbReference>
<dbReference type="Gene3D" id="3.50.50.60">
    <property type="entry name" value="FAD/NAD(P)-binding domain"/>
    <property type="match status" value="1"/>
</dbReference>
<dbReference type="InterPro" id="IPR036188">
    <property type="entry name" value="FAD/NAD-bd_sf"/>
</dbReference>
<dbReference type="InterPro" id="IPR023753">
    <property type="entry name" value="FAD/NAD-binding_dom"/>
</dbReference>
<dbReference type="InterPro" id="IPR016156">
    <property type="entry name" value="FAD/NAD-linked_Rdtase_dimer_sf"/>
</dbReference>
<dbReference type="InterPro" id="IPR046952">
    <property type="entry name" value="GSHR/TRXR-like"/>
</dbReference>
<dbReference type="InterPro" id="IPR001100">
    <property type="entry name" value="Pyr_nuc-diS_OxRdtase"/>
</dbReference>
<dbReference type="InterPro" id="IPR004099">
    <property type="entry name" value="Pyr_nucl-diS_OxRdtase_dimer"/>
</dbReference>
<dbReference type="InterPro" id="IPR012999">
    <property type="entry name" value="Pyr_OxRdtase_I_AS"/>
</dbReference>
<dbReference type="InterPro" id="IPR006338">
    <property type="entry name" value="Thioredoxin/glutathione_Rdtase"/>
</dbReference>
<dbReference type="NCBIfam" id="TIGR01438">
    <property type="entry name" value="TGR"/>
    <property type="match status" value="1"/>
</dbReference>
<dbReference type="PANTHER" id="PTHR42737">
    <property type="entry name" value="GLUTATHIONE REDUCTASE"/>
    <property type="match status" value="1"/>
</dbReference>
<dbReference type="PANTHER" id="PTHR42737:SF2">
    <property type="entry name" value="GLUTATHIONE REDUCTASE"/>
    <property type="match status" value="1"/>
</dbReference>
<dbReference type="Pfam" id="PF07992">
    <property type="entry name" value="Pyr_redox_2"/>
    <property type="match status" value="1"/>
</dbReference>
<dbReference type="Pfam" id="PF02852">
    <property type="entry name" value="Pyr_redox_dim"/>
    <property type="match status" value="1"/>
</dbReference>
<dbReference type="PIRSF" id="PIRSF000350">
    <property type="entry name" value="Mercury_reductase_MerA"/>
    <property type="match status" value="1"/>
</dbReference>
<dbReference type="PRINTS" id="PR00368">
    <property type="entry name" value="FADPNR"/>
</dbReference>
<dbReference type="PRINTS" id="PR00411">
    <property type="entry name" value="PNDRDTASEI"/>
</dbReference>
<dbReference type="SUPFAM" id="SSF51905">
    <property type="entry name" value="FAD/NAD(P)-binding domain"/>
    <property type="match status" value="1"/>
</dbReference>
<dbReference type="SUPFAM" id="SSF55424">
    <property type="entry name" value="FAD/NAD-linked reductases, dimerisation (C-terminal) domain"/>
    <property type="match status" value="1"/>
</dbReference>
<dbReference type="PROSITE" id="PS00076">
    <property type="entry name" value="PYRIDINE_REDOX_1"/>
    <property type="match status" value="1"/>
</dbReference>